<accession>B3A0K4</accession>
<feature type="peptide" id="PRO_0000421560" description="Extended FMRFamide-12" evidence="3">
    <location>
        <begin position="1"/>
        <end position="15"/>
    </location>
</feature>
<feature type="modified residue" description="Phenylalanine amide" evidence="3">
    <location>
        <position position="15"/>
    </location>
</feature>
<feature type="unsure residue" description="L or I" evidence="3">
    <location>
        <position position="4"/>
    </location>
</feature>
<feature type="unsure residue" description="L or I" evidence="3">
    <location>
        <position position="13"/>
    </location>
</feature>
<proteinExistence type="evidence at protein level"/>
<name>FAR12_PACBA</name>
<comment type="function">
    <text evidence="1">FMRFamides and FMRFamide-like peptides are neuropeptides.</text>
</comment>
<comment type="subcellular location">
    <subcellularLocation>
        <location evidence="6">Secreted</location>
    </subcellularLocation>
</comment>
<comment type="similarity">
    <text evidence="2">Belongs to the FARP (FMRF amide related peptide) family.</text>
</comment>
<sequence>SPALADEHNDNFLRF</sequence>
<organism>
    <name type="scientific">Pachyphasma brandbergense</name>
    <name type="common">Gladiator</name>
    <name type="synonym">Heel-walker</name>
    <dbReference type="NCBI Taxonomy" id="1041430"/>
    <lineage>
        <taxon>Eukaryota</taxon>
        <taxon>Metazoa</taxon>
        <taxon>Ecdysozoa</taxon>
        <taxon>Arthropoda</taxon>
        <taxon>Hexapoda</taxon>
        <taxon>Insecta</taxon>
        <taxon>Pterygota</taxon>
        <taxon>Neoptera</taxon>
        <taxon>Polyneoptera</taxon>
        <taxon>Mantophasmatodea</taxon>
        <taxon>Mantophasmatidae</taxon>
        <taxon>Pachyphasma</taxon>
    </lineage>
</organism>
<protein>
    <recommendedName>
        <fullName evidence="4">Extended FMRFamide-12</fullName>
        <shortName evidence="4">FMRFa-12</shortName>
    </recommendedName>
</protein>
<evidence type="ECO:0000250" key="1">
    <source>
        <dbReference type="UniProtKB" id="P34405"/>
    </source>
</evidence>
<evidence type="ECO:0000255" key="2"/>
<evidence type="ECO:0000269" key="3">
    <source>
    </source>
</evidence>
<evidence type="ECO:0000303" key="4">
    <source>
    </source>
</evidence>
<evidence type="ECO:0000305" key="5"/>
<evidence type="ECO:0000305" key="6">
    <source>
    </source>
</evidence>
<keyword id="KW-0027">Amidation</keyword>
<keyword id="KW-0903">Direct protein sequencing</keyword>
<keyword id="KW-0527">Neuropeptide</keyword>
<keyword id="KW-0964">Secreted</keyword>
<dbReference type="GO" id="GO:0005576">
    <property type="term" value="C:extracellular region"/>
    <property type="evidence" value="ECO:0007669"/>
    <property type="project" value="UniProtKB-SubCell"/>
</dbReference>
<dbReference type="GO" id="GO:0007218">
    <property type="term" value="P:neuropeptide signaling pathway"/>
    <property type="evidence" value="ECO:0007669"/>
    <property type="project" value="UniProtKB-KW"/>
</dbReference>
<reference evidence="5" key="1">
    <citation type="journal article" date="2012" name="Syst. Biol.">
        <title>Peptidomics-based phylogeny and biogeography of Mantophasmatodea (Hexapoda).</title>
        <authorList>
            <person name="Predel R."/>
            <person name="Neupert S."/>
            <person name="Huetteroth W."/>
            <person name="Kahnt J."/>
            <person name="Waidelich D."/>
            <person name="Roth S."/>
        </authorList>
    </citation>
    <scope>PROTEIN SEQUENCE</scope>
    <scope>AMIDATION AT PHE-15</scope>
    <source>
        <tissue evidence="3">Thoracic perisympathetic organs</tissue>
    </source>
</reference>